<protein>
    <recommendedName>
        <fullName evidence="1">Acetylglutamate kinase</fullName>
        <ecNumber evidence="1">2.7.2.8</ecNumber>
    </recommendedName>
    <alternativeName>
        <fullName evidence="1">N-acetyl-L-glutamate 5-phosphotransferase</fullName>
    </alternativeName>
    <alternativeName>
        <fullName evidence="1">NAG kinase</fullName>
        <shortName evidence="1">NAGK</shortName>
    </alternativeName>
</protein>
<keyword id="KW-0028">Amino-acid biosynthesis</keyword>
<keyword id="KW-0055">Arginine biosynthesis</keyword>
<keyword id="KW-0067">ATP-binding</keyword>
<keyword id="KW-0963">Cytoplasm</keyword>
<keyword id="KW-0418">Kinase</keyword>
<keyword id="KW-0547">Nucleotide-binding</keyword>
<keyword id="KW-1185">Reference proteome</keyword>
<keyword id="KW-0808">Transferase</keyword>
<evidence type="ECO:0000255" key="1">
    <source>
        <dbReference type="HAMAP-Rule" id="MF_00082"/>
    </source>
</evidence>
<sequence>MTDVAEEAGWATAKTLAEALPYIQIYDRETVVIKYGGHAMGQEDVAKVFAADAVLLKLLGVHPVVVHGGGPQISRMLDKAGVKSTFVDGLRVTDEATMEVAEMVLSGAINKEIANWITLAGAEADVRGVGLSGKDARLITAEKVTRTKKDPDSNIEQAVDLGFVGEPTKVDPQLIEALLTSEHDYIPVVAPIGVSPDGDTFNINADTVAGALAGALKAKRMLMLTDIKGVLDGNGELIREMTIEQARALIDTGVATGGMIPKLENAIHAIESGVEAVVILDGRRPHAMLVELFSEYGAGTLIKR</sequence>
<proteinExistence type="inferred from homology"/>
<name>ARGB_CAUVN</name>
<gene>
    <name evidence="1" type="primary">argB</name>
    <name type="ordered locus">CCNA_00285</name>
</gene>
<reference key="1">
    <citation type="journal article" date="2010" name="J. Bacteriol.">
        <title>The genetic basis of laboratory adaptation in Caulobacter crescentus.</title>
        <authorList>
            <person name="Marks M.E."/>
            <person name="Castro-Rojas C.M."/>
            <person name="Teiling C."/>
            <person name="Du L."/>
            <person name="Kapatral V."/>
            <person name="Walunas T.L."/>
            <person name="Crosson S."/>
        </authorList>
    </citation>
    <scope>NUCLEOTIDE SEQUENCE [LARGE SCALE GENOMIC DNA]</scope>
    <source>
        <strain>NA1000 / CB15N</strain>
    </source>
</reference>
<dbReference type="EC" id="2.7.2.8" evidence="1"/>
<dbReference type="EMBL" id="CP001340">
    <property type="protein sequence ID" value="ACL93752.1"/>
    <property type="molecule type" value="Genomic_DNA"/>
</dbReference>
<dbReference type="RefSeq" id="WP_010918172.1">
    <property type="nucleotide sequence ID" value="NC_011916.1"/>
</dbReference>
<dbReference type="RefSeq" id="YP_002515660.1">
    <property type="nucleotide sequence ID" value="NC_011916.1"/>
</dbReference>
<dbReference type="SMR" id="B8GYF5"/>
<dbReference type="GeneID" id="7330738"/>
<dbReference type="KEGG" id="ccs:CCNA_00285"/>
<dbReference type="PATRIC" id="fig|565050.3.peg.282"/>
<dbReference type="HOGENOM" id="CLU_053680_0_0_5"/>
<dbReference type="OrthoDB" id="9803155at2"/>
<dbReference type="PhylomeDB" id="B8GYF5"/>
<dbReference type="UniPathway" id="UPA00068">
    <property type="reaction ID" value="UER00107"/>
</dbReference>
<dbReference type="Proteomes" id="UP000001364">
    <property type="component" value="Chromosome"/>
</dbReference>
<dbReference type="GO" id="GO:0005737">
    <property type="term" value="C:cytoplasm"/>
    <property type="evidence" value="ECO:0007669"/>
    <property type="project" value="UniProtKB-SubCell"/>
</dbReference>
<dbReference type="GO" id="GO:0003991">
    <property type="term" value="F:acetylglutamate kinase activity"/>
    <property type="evidence" value="ECO:0007669"/>
    <property type="project" value="UniProtKB-UniRule"/>
</dbReference>
<dbReference type="GO" id="GO:0005524">
    <property type="term" value="F:ATP binding"/>
    <property type="evidence" value="ECO:0007669"/>
    <property type="project" value="UniProtKB-UniRule"/>
</dbReference>
<dbReference type="GO" id="GO:0042450">
    <property type="term" value="P:arginine biosynthetic process via ornithine"/>
    <property type="evidence" value="ECO:0007669"/>
    <property type="project" value="UniProtKB-UniRule"/>
</dbReference>
<dbReference type="GO" id="GO:0006526">
    <property type="term" value="P:L-arginine biosynthetic process"/>
    <property type="evidence" value="ECO:0007669"/>
    <property type="project" value="UniProtKB-UniPathway"/>
</dbReference>
<dbReference type="CDD" id="cd04250">
    <property type="entry name" value="AAK_NAGK-C"/>
    <property type="match status" value="1"/>
</dbReference>
<dbReference type="FunFam" id="3.40.1160.10:FF:000004">
    <property type="entry name" value="Acetylglutamate kinase"/>
    <property type="match status" value="1"/>
</dbReference>
<dbReference type="Gene3D" id="3.40.1160.10">
    <property type="entry name" value="Acetylglutamate kinase-like"/>
    <property type="match status" value="1"/>
</dbReference>
<dbReference type="HAMAP" id="MF_00082">
    <property type="entry name" value="ArgB"/>
    <property type="match status" value="1"/>
</dbReference>
<dbReference type="InterPro" id="IPR036393">
    <property type="entry name" value="AceGlu_kinase-like_sf"/>
</dbReference>
<dbReference type="InterPro" id="IPR004662">
    <property type="entry name" value="AcgluKinase_fam"/>
</dbReference>
<dbReference type="InterPro" id="IPR037528">
    <property type="entry name" value="ArgB"/>
</dbReference>
<dbReference type="InterPro" id="IPR001048">
    <property type="entry name" value="Asp/Glu/Uridylate_kinase"/>
</dbReference>
<dbReference type="InterPro" id="IPR001057">
    <property type="entry name" value="Glu/AcGlu_kinase"/>
</dbReference>
<dbReference type="InterPro" id="IPR041727">
    <property type="entry name" value="NAGK-C"/>
</dbReference>
<dbReference type="NCBIfam" id="TIGR00761">
    <property type="entry name" value="argB"/>
    <property type="match status" value="1"/>
</dbReference>
<dbReference type="PANTHER" id="PTHR23342">
    <property type="entry name" value="N-ACETYLGLUTAMATE SYNTHASE"/>
    <property type="match status" value="1"/>
</dbReference>
<dbReference type="PANTHER" id="PTHR23342:SF0">
    <property type="entry name" value="N-ACETYLGLUTAMATE SYNTHASE, MITOCHONDRIAL"/>
    <property type="match status" value="1"/>
</dbReference>
<dbReference type="Pfam" id="PF00696">
    <property type="entry name" value="AA_kinase"/>
    <property type="match status" value="1"/>
</dbReference>
<dbReference type="PIRSF" id="PIRSF000728">
    <property type="entry name" value="NAGK"/>
    <property type="match status" value="1"/>
</dbReference>
<dbReference type="PRINTS" id="PR00474">
    <property type="entry name" value="GLU5KINASE"/>
</dbReference>
<dbReference type="SUPFAM" id="SSF53633">
    <property type="entry name" value="Carbamate kinase-like"/>
    <property type="match status" value="1"/>
</dbReference>
<comment type="function">
    <text evidence="1">Catalyzes the ATP-dependent phosphorylation of N-acetyl-L-glutamate.</text>
</comment>
<comment type="catalytic activity">
    <reaction evidence="1">
        <text>N-acetyl-L-glutamate + ATP = N-acetyl-L-glutamyl 5-phosphate + ADP</text>
        <dbReference type="Rhea" id="RHEA:14629"/>
        <dbReference type="ChEBI" id="CHEBI:30616"/>
        <dbReference type="ChEBI" id="CHEBI:44337"/>
        <dbReference type="ChEBI" id="CHEBI:57936"/>
        <dbReference type="ChEBI" id="CHEBI:456216"/>
        <dbReference type="EC" id="2.7.2.8"/>
    </reaction>
</comment>
<comment type="pathway">
    <text evidence="1">Amino-acid biosynthesis; L-arginine biosynthesis; N(2)-acetyl-L-ornithine from L-glutamate: step 2/4.</text>
</comment>
<comment type="subcellular location">
    <subcellularLocation>
        <location evidence="1">Cytoplasm</location>
    </subcellularLocation>
</comment>
<comment type="similarity">
    <text evidence="1">Belongs to the acetylglutamate kinase family. ArgB subfamily.</text>
</comment>
<accession>B8GYF5</accession>
<feature type="chain" id="PRO_1000118345" description="Acetylglutamate kinase">
    <location>
        <begin position="1"/>
        <end position="304"/>
    </location>
</feature>
<feature type="binding site" evidence="1">
    <location>
        <begin position="69"/>
        <end position="70"/>
    </location>
    <ligand>
        <name>substrate</name>
    </ligand>
</feature>
<feature type="binding site" evidence="1">
    <location>
        <position position="91"/>
    </location>
    <ligand>
        <name>substrate</name>
    </ligand>
</feature>
<feature type="binding site" evidence="1">
    <location>
        <position position="202"/>
    </location>
    <ligand>
        <name>substrate</name>
    </ligand>
</feature>
<feature type="site" description="Transition state stabilizer" evidence="1">
    <location>
        <position position="34"/>
    </location>
</feature>
<feature type="site" description="Transition state stabilizer" evidence="1">
    <location>
        <position position="262"/>
    </location>
</feature>
<organism>
    <name type="scientific">Caulobacter vibrioides (strain NA1000 / CB15N)</name>
    <name type="common">Caulobacter crescentus</name>
    <dbReference type="NCBI Taxonomy" id="565050"/>
    <lineage>
        <taxon>Bacteria</taxon>
        <taxon>Pseudomonadati</taxon>
        <taxon>Pseudomonadota</taxon>
        <taxon>Alphaproteobacteria</taxon>
        <taxon>Caulobacterales</taxon>
        <taxon>Caulobacteraceae</taxon>
        <taxon>Caulobacter</taxon>
    </lineage>
</organism>